<dbReference type="EMBL" id="AY653733">
    <property type="protein sequence ID" value="AAV50930.1"/>
    <property type="molecule type" value="Genomic_DNA"/>
</dbReference>
<dbReference type="SMR" id="Q5UNS9"/>
<dbReference type="KEGG" id="vg:9925315"/>
<dbReference type="Proteomes" id="UP000001134">
    <property type="component" value="Genome"/>
</dbReference>
<dbReference type="GO" id="GO:0044423">
    <property type="term" value="C:virion component"/>
    <property type="evidence" value="ECO:0007669"/>
    <property type="project" value="UniProtKB-KW"/>
</dbReference>
<dbReference type="InterPro" id="IPR008160">
    <property type="entry name" value="Collagen"/>
</dbReference>
<dbReference type="InterPro" id="IPR050938">
    <property type="entry name" value="Collagen_Structural_Proteins"/>
</dbReference>
<dbReference type="PANTHER" id="PTHR37456:SF3">
    <property type="entry name" value="COLLAGEN ALPHA-1(XXV) CHAIN"/>
    <property type="match status" value="1"/>
</dbReference>
<dbReference type="PANTHER" id="PTHR37456">
    <property type="entry name" value="SI:CH211-266K2.1"/>
    <property type="match status" value="1"/>
</dbReference>
<dbReference type="Pfam" id="PF01391">
    <property type="entry name" value="Collagen"/>
    <property type="match status" value="7"/>
</dbReference>
<sequence>MLDMMNNSLSYNRPECINFQNNSVQKNVIRVCENEPNTFVGSGIPSQIIGKQGDIYLDRITRIYYKKINGVWVKNVCNNHRCCYPKECKGNPHTKGEKGETGPKGIKGEKGDRGLKGEKGNNGDPGEKGEKGAKGDKGESGEKGAKGDKGDKGDIGEKGEKGDKGDIGEKGEKGDKGDIGEKGDKGDLGEKGEKGDPGQKGEKGDKGDFGDKGDKGDIGEKGDKGDIGDKGEIGNKGDVGEKGSKGDKGIDGTSILFGFGIPSPDLGVDGDLYLDANTDELYGKVNGQWIPITNLKGEKGDKGNKGIDGEKGNKGDTGDKGIDGSKGDKGDTGNKGDIGDKGDQGIKGDIGDKGEKGDIGEKGDKGEKGIKGDKGDIGEKGNKGDIGDKGEKGDKGIDGDKGIKGDKGDIGEKGDKGDIGEKGNKGEKGDKGDKGDIGEKGDKGDTGSKGDKGDKGEKGDKGDKGEKGDIGDKGEKGDKGDKGDKGDKGDKGDKGDTGDKGDKGDKGDKGDKGDNGTSILFGSGPPSPDLGMVGDLYIDVTTDELYGKVNAKMNDNIRVSAKVNVNKQITLQATGQWIPLTNLKGDKGDKGINGNKGDKGEKGDKGNPGTNAGKGEKGDKGDKGDAGTSILFGQGAPDPNQGVDGDIYIDTLTGELYRKVNGLWVPEIDIKGDKGEKGDKGNAGDKGTSGEKGDLGSKGEKGDTGEKGDKGNKGDRGDKGIKGDIGSKGDKGDIGNKGDKGDRGDKGIKGDAGLKGDKGDIGQKGDKGTKGDRGDKGEKGDAGLKGNKGDIGLKGDKGTKGDRGDKGTKGDRGDKGDIGNKGDKGDKGTKGDRGDKGVKGDKGDKGNKGDKGNIGIKGDKGDRSDKGLKGDKGDKGDTGDIGLKGDKGDIGEKGIKGDKGINGSKGYKGDKGDKGSKGDKGNKGDKGSKGDKGDIGIKGSKGDKGDKGDKGSKGDKGDIGSKGDKGDKGDIGTKGDKGTKGDKGIKGDIGSKGDKGSKGDKGSKGDKGDIGSKGDKGDKGDKGSKGDKGSKGIKGDKGDKGTKGDKGIKGDKGDKGIKGDKGDKGDKGDKGIKGDKGDKGDKGDKGDKGTKGDKGDKGDKGSKGDKGDKGDKGDKGEKGSKGDKGDKGDKGDKGDKGDKGDTATCEIVNTDGQTRVSACNTGFVKIEASGYEITTAPNGSSDLAPDPFDPSNVSGMNTKLFGIQNGAFRSGNFTATNLSDIGQYSAVFGYQTTATGSGSIVYGINNSSGISSGSNGSLVGGLANTGGIIRSFSGAEGSIAFGSSEINGIITTGFGAQGSIVGGYSSGGTIATGSGANASEAFGQATTGSLITTGPGAIGSSTRGYSVGNSVITTGLASWASQITGYASNSGIIFSGSGTSTSDIIASVTDSSTLTIGDGSIGSSIRGYCSSGSLISLGPNSNGSIINATVNNFSTLITSSGVNGSSIVARANNSGLISISGNCFGSQFVFNSINGGNITIGSTHAGSQIVGSANTSGIITVVGGLNGTLVAANSSSTSGVRISTSFGSLLAGNATTGGWFRPGQAQGSVIAGQASASGVILTAFNAGCNVIGYANRGSTLGINQNAFGYSVMGYADLNSTITSNALGANACRIMGYALNNSTIFMDSLVAANATDLFGYANNSGVIQAADQCAGALARGVAQNNSSIVTRGNGSMTFGFSNNNSTIFTGQFSDGCFVGGYANSGGTISTGSTSPASHVFGFSNSGSFITTGNNTNASTVFGYATANSTITTGANSNGSLAVGYTGSSGELLGALGQTSFAIGRNNTASGAYSGAIGISSYANMEGSFAHSSFQDTVNPVSAGRSQNIKVMGRKVGTQIVLANGSYATLPYDGYGDVFARLIGSSGTAVGLTFQVTRTAGTYTVAPPITPSGGILWLSPSGVAAPPLAITALGTSGFTITLTDAQNYNCYFDIVNYSS</sequence>
<protein>
    <recommendedName>
        <fullName>Collagen-like protein 7</fullName>
    </recommendedName>
</protein>
<proteinExistence type="predicted"/>
<comment type="function">
    <text evidence="3">May participate in the formation of a layer of cross-linked glycosylated fibrils at the viral surface thus giving it a hairy-like appearance.</text>
</comment>
<comment type="subcellular location">
    <subcellularLocation>
        <location>Virion</location>
    </subcellularLocation>
</comment>
<comment type="PTM">
    <text evidence="3">May be hydroxylated on lysine by the viral-encoded procollagen-lysine,2-oxoglutarate 5-dioxygenase.</text>
</comment>
<feature type="chain" id="PRO_0000059422" description="Collagen-like protein 7">
    <location>
        <begin position="1"/>
        <end position="1937"/>
    </location>
</feature>
<feature type="domain" description="Collagen-like 1">
    <location>
        <begin position="102"/>
        <end position="161"/>
    </location>
</feature>
<feature type="domain" description="Collagen-like 2">
    <location>
        <begin position="168"/>
        <end position="227"/>
    </location>
</feature>
<feature type="domain" description="Collagen-like 3">
    <location>
        <begin position="297"/>
        <end position="356"/>
    </location>
</feature>
<feature type="domain" description="Collagen-like 4">
    <location>
        <begin position="363"/>
        <end position="422"/>
    </location>
</feature>
<feature type="domain" description="Collagen-like 5">
    <location>
        <begin position="453"/>
        <end position="512"/>
    </location>
</feature>
<feature type="domain" description="Collagen-like 6">
    <location>
        <begin position="672"/>
        <end position="731"/>
    </location>
</feature>
<feature type="domain" description="Collagen-like 7">
    <location>
        <begin position="735"/>
        <end position="854"/>
    </location>
</feature>
<feature type="domain" description="Collagen-like 8">
    <location>
        <begin position="867"/>
        <end position="926"/>
    </location>
</feature>
<feature type="domain" description="Collagen-like 9">
    <location>
        <begin position="936"/>
        <end position="995"/>
    </location>
</feature>
<feature type="domain" description="Collagen-like 10">
    <location>
        <begin position="1023"/>
        <end position="1142"/>
    </location>
</feature>
<feature type="region of interest" description="Disordered" evidence="2">
    <location>
        <begin position="88"/>
        <end position="248"/>
    </location>
</feature>
<feature type="region of interest" description="Disordered" evidence="2">
    <location>
        <begin position="294"/>
        <end position="531"/>
    </location>
</feature>
<feature type="region of interest" description="Disordered" evidence="2">
    <location>
        <begin position="583"/>
        <end position="643"/>
    </location>
</feature>
<feature type="region of interest" description="Disordered" evidence="2">
    <location>
        <begin position="670"/>
        <end position="1144"/>
    </location>
</feature>
<feature type="compositionally biased region" description="Basic and acidic residues" evidence="2">
    <location>
        <begin position="296"/>
        <end position="514"/>
    </location>
</feature>
<feature type="compositionally biased region" description="Basic and acidic residues" evidence="2">
    <location>
        <begin position="584"/>
        <end position="605"/>
    </location>
</feature>
<feature type="compositionally biased region" description="Basic and acidic residues" evidence="2">
    <location>
        <begin position="614"/>
        <end position="625"/>
    </location>
</feature>
<feature type="compositionally biased region" description="Basic and acidic residues" evidence="2">
    <location>
        <begin position="670"/>
        <end position="899"/>
    </location>
</feature>
<feature type="compositionally biased region" description="Basic and acidic residues" evidence="2">
    <location>
        <begin position="907"/>
        <end position="1141"/>
    </location>
</feature>
<feature type="glycosylation site" description="N-linked (GlcNAc...) asparagine; by host" evidence="1">
    <location>
        <position position="6"/>
    </location>
</feature>
<feature type="glycosylation site" description="N-linked (GlcNAc...) asparagine; by host" evidence="1">
    <location>
        <position position="21"/>
    </location>
</feature>
<feature type="glycosylation site" description="N-linked (GlcNAc...) asparagine; by host" evidence="1">
    <location>
        <position position="515"/>
    </location>
</feature>
<feature type="glycosylation site" description="N-linked (GlcNAc...) asparagine; by host" evidence="1">
    <location>
        <position position="902"/>
    </location>
</feature>
<feature type="glycosylation site" description="N-linked (GlcNAc...) asparagine; by host" evidence="1">
    <location>
        <position position="1178"/>
    </location>
</feature>
<feature type="glycosylation site" description="N-linked (GlcNAc...) asparagine; by host" evidence="1">
    <location>
        <position position="1192"/>
    </location>
</feature>
<feature type="glycosylation site" description="N-linked (GlcNAc...) asparagine; by host" evidence="1">
    <location>
        <position position="1212"/>
    </location>
</feature>
<feature type="glycosylation site" description="N-linked (GlcNAc...) asparagine; by host" evidence="1">
    <location>
        <position position="1217"/>
    </location>
</feature>
<feature type="glycosylation site" description="N-linked (GlcNAc...) asparagine; by host" evidence="1">
    <location>
        <position position="1245"/>
    </location>
</feature>
<feature type="glycosylation site" description="N-linked (GlcNAc...) asparagine; by host" evidence="1">
    <location>
        <position position="1246"/>
    </location>
</feature>
<feature type="glycosylation site" description="N-linked (GlcNAc...) asparagine; by host" evidence="1">
    <location>
        <position position="1255"/>
    </location>
</feature>
<feature type="glycosylation site" description="N-linked (GlcNAc...) asparagine; by host" evidence="1">
    <location>
        <position position="1317"/>
    </location>
</feature>
<feature type="glycosylation site" description="N-linked (GlcNAc...) asparagine; by host" evidence="1">
    <location>
        <position position="1422"/>
    </location>
</feature>
<feature type="glycosylation site" description="N-linked (GlcNAc...) asparagine; by host" evidence="1">
    <location>
        <position position="1427"/>
    </location>
</feature>
<feature type="glycosylation site" description="N-linked (GlcNAc...) asparagine; by host" evidence="1">
    <location>
        <position position="1432"/>
    </location>
</feature>
<feature type="glycosylation site" description="N-linked (GlcNAc...) asparagine; by host" evidence="1">
    <location>
        <position position="1443"/>
    </location>
</feature>
<feature type="glycosylation site" description="N-linked (GlcNAc...) asparagine; by host" evidence="1">
    <location>
        <position position="1452"/>
    </location>
</feature>
<feature type="glycosylation site" description="N-linked (GlcNAc...) asparagine; by host" evidence="1">
    <location>
        <position position="1477"/>
    </location>
</feature>
<feature type="glycosylation site" description="N-linked (GlcNAc...) asparagine; by host" evidence="1">
    <location>
        <position position="1494"/>
    </location>
</feature>
<feature type="glycosylation site" description="N-linked (GlcNAc...) asparagine; by host" evidence="1">
    <location>
        <position position="1506"/>
    </location>
</feature>
<feature type="glycosylation site" description="N-linked (GlcNAc...) asparagine; by host" evidence="1">
    <location>
        <position position="1513"/>
    </location>
</feature>
<feature type="glycosylation site" description="N-linked (GlcNAc...) asparagine; by host" evidence="1">
    <location>
        <position position="1533"/>
    </location>
</feature>
<feature type="glycosylation site" description="N-linked (GlcNAc...) asparagine; by host" evidence="1">
    <location>
        <position position="1598"/>
    </location>
</feature>
<feature type="glycosylation site" description="N-linked (GlcNAc...) asparagine; by host" evidence="1">
    <location>
        <position position="1619"/>
    </location>
</feature>
<feature type="glycosylation site" description="N-linked (GlcNAc...) asparagine; by host" evidence="1">
    <location>
        <position position="1620"/>
    </location>
</feature>
<feature type="glycosylation site" description="N-linked (GlcNAc...) asparagine; by host" evidence="1">
    <location>
        <position position="1632"/>
    </location>
</feature>
<feature type="glycosylation site" description="N-linked (GlcNAc...) asparagine; by host" evidence="1">
    <location>
        <position position="1641"/>
    </location>
</feature>
<feature type="glycosylation site" description="N-linked (GlcNAc...) asparagine; by host" evidence="1">
    <location>
        <position position="1663"/>
    </location>
</feature>
<feature type="glycosylation site" description="N-linked (GlcNAc...) asparagine; by host" evidence="1">
    <location>
        <position position="1664"/>
    </location>
</feature>
<feature type="glycosylation site" description="N-linked (GlcNAc...) asparagine; by host" evidence="1">
    <location>
        <position position="1672"/>
    </location>
</feature>
<feature type="glycosylation site" description="N-linked (GlcNAc...) asparagine; by host" evidence="1">
    <location>
        <position position="1682"/>
    </location>
</feature>
<feature type="glycosylation site" description="N-linked (GlcNAc...) asparagine; by host" evidence="1">
    <location>
        <position position="1683"/>
    </location>
</feature>
<feature type="glycosylation site" description="N-linked (GlcNAc...) asparagine; by host" evidence="1">
    <location>
        <position position="1732"/>
    </location>
</feature>
<feature type="glycosylation site" description="N-linked (GlcNAc...) asparagine; by host" evidence="1">
    <location>
        <position position="1735"/>
    </location>
</feature>
<feature type="glycosylation site" description="N-linked (GlcNAc...) asparagine; by host" evidence="1">
    <location>
        <position position="1746"/>
    </location>
</feature>
<feature type="glycosylation site" description="N-linked (GlcNAc...) asparagine; by host" evidence="1">
    <location>
        <position position="1756"/>
    </location>
</feature>
<feature type="glycosylation site" description="N-linked (GlcNAc...) asparagine; by host" evidence="1">
    <location>
        <position position="1784"/>
    </location>
</feature>
<feature type="glycosylation site" description="N-linked (GlcNAc...) asparagine; by host" evidence="1">
    <location>
        <position position="1842"/>
    </location>
</feature>
<feature type="glycosylation site" description="N-linked (GlcNAc...) asparagine; by host" evidence="1">
    <location>
        <position position="1934"/>
    </location>
</feature>
<organism>
    <name type="scientific">Acanthamoeba polyphaga mimivirus</name>
    <name type="common">APMV</name>
    <dbReference type="NCBI Taxonomy" id="212035"/>
    <lineage>
        <taxon>Viruses</taxon>
        <taxon>Varidnaviria</taxon>
        <taxon>Bamfordvirae</taxon>
        <taxon>Nucleocytoviricota</taxon>
        <taxon>Megaviricetes</taxon>
        <taxon>Imitervirales</taxon>
        <taxon>Mimiviridae</taxon>
        <taxon>Megamimivirinae</taxon>
        <taxon>Mimivirus</taxon>
        <taxon>Mimivirus bradfordmassiliense</taxon>
    </lineage>
</organism>
<accession>Q5UNS9</accession>
<name>COLL7_MIMIV</name>
<keyword id="KW-0176">Collagen</keyword>
<keyword id="KW-0325">Glycoprotein</keyword>
<keyword id="KW-0379">Hydroxylation</keyword>
<keyword id="KW-1185">Reference proteome</keyword>
<keyword id="KW-0677">Repeat</keyword>
<keyword id="KW-0946">Virion</keyword>
<organismHost>
    <name type="scientific">Acanthamoeba polyphaga</name>
    <name type="common">Amoeba</name>
    <dbReference type="NCBI Taxonomy" id="5757"/>
</organismHost>
<reference key="1">
    <citation type="journal article" date="2004" name="Science">
        <title>The 1.2-megabase genome sequence of Mimivirus.</title>
        <authorList>
            <person name="Raoult D."/>
            <person name="Audic S."/>
            <person name="Robert C."/>
            <person name="Abergel C."/>
            <person name="Renesto P."/>
            <person name="Ogata H."/>
            <person name="La Scola B."/>
            <person name="Susan M."/>
            <person name="Claverie J.-M."/>
        </authorList>
    </citation>
    <scope>NUCLEOTIDE SEQUENCE [LARGE SCALE GENOMIC DNA]</scope>
    <source>
        <strain>Rowbotham-Bradford</strain>
    </source>
</reference>
<gene>
    <name type="ordered locus">MIMI_L669</name>
</gene>
<evidence type="ECO:0000255" key="1"/>
<evidence type="ECO:0000256" key="2">
    <source>
        <dbReference type="SAM" id="MobiDB-lite"/>
    </source>
</evidence>
<evidence type="ECO:0000305" key="3"/>